<feature type="chain" id="PRO_1000200649" description="NAD(P)H dehydrogenase (quinone)">
    <location>
        <begin position="1"/>
        <end position="199"/>
    </location>
</feature>
<feature type="domain" description="Flavodoxin-like" evidence="1">
    <location>
        <begin position="4"/>
        <end position="190"/>
    </location>
</feature>
<feature type="binding site" evidence="1">
    <location>
        <begin position="10"/>
        <end position="15"/>
    </location>
    <ligand>
        <name>FMN</name>
        <dbReference type="ChEBI" id="CHEBI:58210"/>
    </ligand>
</feature>
<feature type="binding site" evidence="1">
    <location>
        <position position="12"/>
    </location>
    <ligand>
        <name>NAD(+)</name>
        <dbReference type="ChEBI" id="CHEBI:57540"/>
    </ligand>
</feature>
<feature type="binding site" evidence="1">
    <location>
        <begin position="79"/>
        <end position="81"/>
    </location>
    <ligand>
        <name>FMN</name>
        <dbReference type="ChEBI" id="CHEBI:58210"/>
    </ligand>
</feature>
<feature type="binding site" evidence="1">
    <location>
        <position position="99"/>
    </location>
    <ligand>
        <name>substrate</name>
    </ligand>
</feature>
<feature type="binding site" evidence="1">
    <location>
        <begin position="114"/>
        <end position="119"/>
    </location>
    <ligand>
        <name>FMN</name>
        <dbReference type="ChEBI" id="CHEBI:58210"/>
    </ligand>
</feature>
<feature type="binding site" evidence="1">
    <location>
        <position position="134"/>
    </location>
    <ligand>
        <name>FMN</name>
        <dbReference type="ChEBI" id="CHEBI:58210"/>
    </ligand>
</feature>
<proteinExistence type="inferred from homology"/>
<reference key="1">
    <citation type="journal article" date="2010" name="J. Bacteriol.">
        <title>Genome sequence of the deep-rooted Yersinia pestis strain Angola reveals new insights into the evolution and pangenome of the plague bacterium.</title>
        <authorList>
            <person name="Eppinger M."/>
            <person name="Worsham P.L."/>
            <person name="Nikolich M.P."/>
            <person name="Riley D.R."/>
            <person name="Sebastian Y."/>
            <person name="Mou S."/>
            <person name="Achtman M."/>
            <person name="Lindler L.E."/>
            <person name="Ravel J."/>
        </authorList>
    </citation>
    <scope>NUCLEOTIDE SEQUENCE [LARGE SCALE GENOMIC DNA]</scope>
    <source>
        <strain>Angola</strain>
    </source>
</reference>
<name>NQOR_YERPG</name>
<keyword id="KW-0285">Flavoprotein</keyword>
<keyword id="KW-0288">FMN</keyword>
<keyword id="KW-0520">NAD</keyword>
<keyword id="KW-0521">NADP</keyword>
<keyword id="KW-0547">Nucleotide-binding</keyword>
<keyword id="KW-0560">Oxidoreductase</keyword>
<dbReference type="EC" id="1.6.5.2" evidence="1"/>
<dbReference type="EMBL" id="CP000901">
    <property type="protein sequence ID" value="ABX86483.1"/>
    <property type="molecule type" value="Genomic_DNA"/>
</dbReference>
<dbReference type="SMR" id="A9R7R8"/>
<dbReference type="KEGG" id="ypg:YpAngola_A2043"/>
<dbReference type="PATRIC" id="fig|349746.12.peg.3026"/>
<dbReference type="GO" id="GO:0016020">
    <property type="term" value="C:membrane"/>
    <property type="evidence" value="ECO:0007669"/>
    <property type="project" value="TreeGrafter"/>
</dbReference>
<dbReference type="GO" id="GO:0050660">
    <property type="term" value="F:flavin adenine dinucleotide binding"/>
    <property type="evidence" value="ECO:0007669"/>
    <property type="project" value="UniProtKB-UniRule"/>
</dbReference>
<dbReference type="GO" id="GO:0010181">
    <property type="term" value="F:FMN binding"/>
    <property type="evidence" value="ECO:0007669"/>
    <property type="project" value="InterPro"/>
</dbReference>
<dbReference type="GO" id="GO:0051287">
    <property type="term" value="F:NAD binding"/>
    <property type="evidence" value="ECO:0007669"/>
    <property type="project" value="UniProtKB-UniRule"/>
</dbReference>
<dbReference type="GO" id="GO:0050136">
    <property type="term" value="F:NADH:ubiquinone reductase (non-electrogenic) activity"/>
    <property type="evidence" value="ECO:0007669"/>
    <property type="project" value="RHEA"/>
</dbReference>
<dbReference type="GO" id="GO:0050661">
    <property type="term" value="F:NADP binding"/>
    <property type="evidence" value="ECO:0007669"/>
    <property type="project" value="UniProtKB-UniRule"/>
</dbReference>
<dbReference type="GO" id="GO:0008753">
    <property type="term" value="F:NADPH dehydrogenase (quinone) activity"/>
    <property type="evidence" value="ECO:0007669"/>
    <property type="project" value="RHEA"/>
</dbReference>
<dbReference type="FunFam" id="3.40.50.360:FF:000004">
    <property type="entry name" value="NAD(P)H dehydrogenase (quinone)"/>
    <property type="match status" value="1"/>
</dbReference>
<dbReference type="Gene3D" id="3.40.50.360">
    <property type="match status" value="1"/>
</dbReference>
<dbReference type="HAMAP" id="MF_01017">
    <property type="entry name" value="NQOR"/>
    <property type="match status" value="1"/>
</dbReference>
<dbReference type="InterPro" id="IPR008254">
    <property type="entry name" value="Flavodoxin/NO_synth"/>
</dbReference>
<dbReference type="InterPro" id="IPR029039">
    <property type="entry name" value="Flavoprotein-like_sf"/>
</dbReference>
<dbReference type="InterPro" id="IPR010089">
    <property type="entry name" value="Flavoprotein_WrbA-like"/>
</dbReference>
<dbReference type="InterPro" id="IPR005025">
    <property type="entry name" value="FMN_Rdtase-like_dom"/>
</dbReference>
<dbReference type="InterPro" id="IPR037513">
    <property type="entry name" value="NQO"/>
</dbReference>
<dbReference type="NCBIfam" id="TIGR01755">
    <property type="entry name" value="flav_wrbA"/>
    <property type="match status" value="1"/>
</dbReference>
<dbReference type="NCBIfam" id="NF002999">
    <property type="entry name" value="PRK03767.1"/>
    <property type="match status" value="1"/>
</dbReference>
<dbReference type="PANTHER" id="PTHR30546">
    <property type="entry name" value="FLAVODOXIN-RELATED PROTEIN WRBA-RELATED"/>
    <property type="match status" value="1"/>
</dbReference>
<dbReference type="PANTHER" id="PTHR30546:SF23">
    <property type="entry name" value="FLAVOPROTEIN-LIKE PROTEIN YCP4-RELATED"/>
    <property type="match status" value="1"/>
</dbReference>
<dbReference type="Pfam" id="PF03358">
    <property type="entry name" value="FMN_red"/>
    <property type="match status" value="1"/>
</dbReference>
<dbReference type="SUPFAM" id="SSF52218">
    <property type="entry name" value="Flavoproteins"/>
    <property type="match status" value="1"/>
</dbReference>
<dbReference type="PROSITE" id="PS50902">
    <property type="entry name" value="FLAVODOXIN_LIKE"/>
    <property type="match status" value="1"/>
</dbReference>
<evidence type="ECO:0000255" key="1">
    <source>
        <dbReference type="HAMAP-Rule" id="MF_01017"/>
    </source>
</evidence>
<accession>A9R7R8</accession>
<organism>
    <name type="scientific">Yersinia pestis bv. Antiqua (strain Angola)</name>
    <dbReference type="NCBI Taxonomy" id="349746"/>
    <lineage>
        <taxon>Bacteria</taxon>
        <taxon>Pseudomonadati</taxon>
        <taxon>Pseudomonadota</taxon>
        <taxon>Gammaproteobacteria</taxon>
        <taxon>Enterobacterales</taxon>
        <taxon>Yersiniaceae</taxon>
        <taxon>Yersinia</taxon>
    </lineage>
</organism>
<sequence length="199" mass="20808">MAKILVLYYSMYGHIETLAGAIAEGARKVSGVDVTIKRVPETMPAEAFAKAGGKTNQQAPVATPHELADYDGIIFGTPTRFGNMSGQMRTFLDQTGGLWASGALYGKVASVFASTGTGGGQEHTITSTWTTLAHHGFIIVPIGYGAKELFDVSQTRGGTPYGATTIAGGDGSRQPSAEELAIARFQGEHVAKITAKLKG</sequence>
<comment type="catalytic activity">
    <reaction evidence="1">
        <text>a quinone + NADH + H(+) = a quinol + NAD(+)</text>
        <dbReference type="Rhea" id="RHEA:46160"/>
        <dbReference type="ChEBI" id="CHEBI:15378"/>
        <dbReference type="ChEBI" id="CHEBI:24646"/>
        <dbReference type="ChEBI" id="CHEBI:57540"/>
        <dbReference type="ChEBI" id="CHEBI:57945"/>
        <dbReference type="ChEBI" id="CHEBI:132124"/>
        <dbReference type="EC" id="1.6.5.2"/>
    </reaction>
</comment>
<comment type="catalytic activity">
    <reaction evidence="1">
        <text>a quinone + NADPH + H(+) = a quinol + NADP(+)</text>
        <dbReference type="Rhea" id="RHEA:46164"/>
        <dbReference type="ChEBI" id="CHEBI:15378"/>
        <dbReference type="ChEBI" id="CHEBI:24646"/>
        <dbReference type="ChEBI" id="CHEBI:57783"/>
        <dbReference type="ChEBI" id="CHEBI:58349"/>
        <dbReference type="ChEBI" id="CHEBI:132124"/>
        <dbReference type="EC" id="1.6.5.2"/>
    </reaction>
</comment>
<comment type="cofactor">
    <cofactor evidence="1">
        <name>FMN</name>
        <dbReference type="ChEBI" id="CHEBI:58210"/>
    </cofactor>
    <text evidence="1">Binds 1 FMN per monomer.</text>
</comment>
<comment type="similarity">
    <text evidence="1">Belongs to the WrbA family.</text>
</comment>
<protein>
    <recommendedName>
        <fullName evidence="1">NAD(P)H dehydrogenase (quinone)</fullName>
        <ecNumber evidence="1">1.6.5.2</ecNumber>
    </recommendedName>
    <alternativeName>
        <fullName>Flavoprotein WrbA</fullName>
    </alternativeName>
    <alternativeName>
        <fullName evidence="1">NAD(P)H:quinone oxidoreductase</fullName>
        <shortName evidence="1">NQO</shortName>
    </alternativeName>
</protein>
<gene>
    <name type="ordered locus">YpAngola_A2043</name>
</gene>